<protein>
    <recommendedName>
        <fullName>Nitric oxide reductase transcription regulator NorR2</fullName>
    </recommendedName>
</protein>
<organism>
    <name type="scientific">Cupriavidus necator (strain ATCC 17699 / DSM 428 / KCTC 22496 / NCIMB 10442 / H16 / Stanier 337)</name>
    <name type="common">Ralstonia eutropha</name>
    <dbReference type="NCBI Taxonomy" id="381666"/>
    <lineage>
        <taxon>Bacteria</taxon>
        <taxon>Pseudomonadati</taxon>
        <taxon>Pseudomonadota</taxon>
        <taxon>Betaproteobacteria</taxon>
        <taxon>Burkholderiales</taxon>
        <taxon>Burkholderiaceae</taxon>
        <taxon>Cupriavidus</taxon>
    </lineage>
</organism>
<dbReference type="EMBL" id="AJ278372">
    <property type="protein sequence ID" value="CAC00712.1"/>
    <property type="molecule type" value="Genomic_DNA"/>
</dbReference>
<dbReference type="EMBL" id="AM260480">
    <property type="protein sequence ID" value="CAJ97107.1"/>
    <property type="molecule type" value="Genomic_DNA"/>
</dbReference>
<dbReference type="SMR" id="Q9K4U8"/>
<dbReference type="STRING" id="381666.H16_B2325"/>
<dbReference type="KEGG" id="reh:H16_B2325"/>
<dbReference type="eggNOG" id="COG3604">
    <property type="taxonomic scope" value="Bacteria"/>
</dbReference>
<dbReference type="HOGENOM" id="CLU_000445_125_1_4"/>
<dbReference type="OrthoDB" id="9761705at2"/>
<dbReference type="UniPathway" id="UPA00652"/>
<dbReference type="Proteomes" id="UP000008210">
    <property type="component" value="Chromosome 2"/>
</dbReference>
<dbReference type="GO" id="GO:0005524">
    <property type="term" value="F:ATP binding"/>
    <property type="evidence" value="ECO:0007669"/>
    <property type="project" value="UniProtKB-KW"/>
</dbReference>
<dbReference type="GO" id="GO:0016887">
    <property type="term" value="F:ATP hydrolysis activity"/>
    <property type="evidence" value="ECO:0007669"/>
    <property type="project" value="InterPro"/>
</dbReference>
<dbReference type="GO" id="GO:0043565">
    <property type="term" value="F:sequence-specific DNA binding"/>
    <property type="evidence" value="ECO:0007669"/>
    <property type="project" value="InterPro"/>
</dbReference>
<dbReference type="GO" id="GO:0019333">
    <property type="term" value="P:denitrification pathway"/>
    <property type="evidence" value="ECO:0007669"/>
    <property type="project" value="UniProtKB-UniPathway"/>
</dbReference>
<dbReference type="GO" id="GO:0000160">
    <property type="term" value="P:phosphorelay signal transduction system"/>
    <property type="evidence" value="ECO:0007669"/>
    <property type="project" value="UniProtKB-KW"/>
</dbReference>
<dbReference type="GO" id="GO:0006355">
    <property type="term" value="P:regulation of DNA-templated transcription"/>
    <property type="evidence" value="ECO:0007669"/>
    <property type="project" value="InterPro"/>
</dbReference>
<dbReference type="CDD" id="cd00009">
    <property type="entry name" value="AAA"/>
    <property type="match status" value="1"/>
</dbReference>
<dbReference type="FunFam" id="3.40.50.300:FF:000006">
    <property type="entry name" value="DNA-binding transcriptional regulator NtrC"/>
    <property type="match status" value="1"/>
</dbReference>
<dbReference type="Gene3D" id="1.10.8.60">
    <property type="match status" value="1"/>
</dbReference>
<dbReference type="Gene3D" id="3.30.450.40">
    <property type="match status" value="1"/>
</dbReference>
<dbReference type="Gene3D" id="1.10.10.60">
    <property type="entry name" value="Homeodomain-like"/>
    <property type="match status" value="1"/>
</dbReference>
<dbReference type="Gene3D" id="3.40.50.300">
    <property type="entry name" value="P-loop containing nucleotide triphosphate hydrolases"/>
    <property type="match status" value="1"/>
</dbReference>
<dbReference type="InterPro" id="IPR003593">
    <property type="entry name" value="AAA+_ATPase"/>
</dbReference>
<dbReference type="InterPro" id="IPR003018">
    <property type="entry name" value="GAF"/>
</dbReference>
<dbReference type="InterPro" id="IPR029016">
    <property type="entry name" value="GAF-like_dom_sf"/>
</dbReference>
<dbReference type="InterPro" id="IPR009057">
    <property type="entry name" value="Homeodomain-like_sf"/>
</dbReference>
<dbReference type="InterPro" id="IPR002197">
    <property type="entry name" value="HTH_Fis"/>
</dbReference>
<dbReference type="InterPro" id="IPR027417">
    <property type="entry name" value="P-loop_NTPase"/>
</dbReference>
<dbReference type="InterPro" id="IPR002078">
    <property type="entry name" value="Sigma_54_int"/>
</dbReference>
<dbReference type="InterPro" id="IPR025662">
    <property type="entry name" value="Sigma_54_int_dom_ATP-bd_1"/>
</dbReference>
<dbReference type="InterPro" id="IPR025943">
    <property type="entry name" value="Sigma_54_int_dom_ATP-bd_2"/>
</dbReference>
<dbReference type="InterPro" id="IPR025944">
    <property type="entry name" value="Sigma_54_int_dom_CS"/>
</dbReference>
<dbReference type="NCBIfam" id="NF003451">
    <property type="entry name" value="PRK05022.1"/>
    <property type="match status" value="1"/>
</dbReference>
<dbReference type="PANTHER" id="PTHR32071:SF35">
    <property type="entry name" value="ANAEROBIC NITRIC OXIDE REDUCTASE TRANSCRIPTION REGULATOR NORR"/>
    <property type="match status" value="1"/>
</dbReference>
<dbReference type="PANTHER" id="PTHR32071">
    <property type="entry name" value="TRANSCRIPTIONAL REGULATORY PROTEIN"/>
    <property type="match status" value="1"/>
</dbReference>
<dbReference type="Pfam" id="PF01590">
    <property type="entry name" value="GAF"/>
    <property type="match status" value="1"/>
</dbReference>
<dbReference type="Pfam" id="PF02954">
    <property type="entry name" value="HTH_8"/>
    <property type="match status" value="1"/>
</dbReference>
<dbReference type="Pfam" id="PF00158">
    <property type="entry name" value="Sigma54_activat"/>
    <property type="match status" value="1"/>
</dbReference>
<dbReference type="PRINTS" id="PR01590">
    <property type="entry name" value="HTHFIS"/>
</dbReference>
<dbReference type="SMART" id="SM00382">
    <property type="entry name" value="AAA"/>
    <property type="match status" value="1"/>
</dbReference>
<dbReference type="SMART" id="SM00065">
    <property type="entry name" value="GAF"/>
    <property type="match status" value="1"/>
</dbReference>
<dbReference type="SUPFAM" id="SSF55781">
    <property type="entry name" value="GAF domain-like"/>
    <property type="match status" value="1"/>
</dbReference>
<dbReference type="SUPFAM" id="SSF46689">
    <property type="entry name" value="Homeodomain-like"/>
    <property type="match status" value="1"/>
</dbReference>
<dbReference type="SUPFAM" id="SSF52540">
    <property type="entry name" value="P-loop containing nucleoside triphosphate hydrolases"/>
    <property type="match status" value="1"/>
</dbReference>
<dbReference type="PROSITE" id="PS00675">
    <property type="entry name" value="SIGMA54_INTERACT_1"/>
    <property type="match status" value="1"/>
</dbReference>
<dbReference type="PROSITE" id="PS00676">
    <property type="entry name" value="SIGMA54_INTERACT_2"/>
    <property type="match status" value="1"/>
</dbReference>
<dbReference type="PROSITE" id="PS00688">
    <property type="entry name" value="SIGMA54_INTERACT_3"/>
    <property type="match status" value="1"/>
</dbReference>
<dbReference type="PROSITE" id="PS50045">
    <property type="entry name" value="SIGMA54_INTERACT_4"/>
    <property type="match status" value="1"/>
</dbReference>
<evidence type="ECO:0000250" key="1"/>
<evidence type="ECO:0000255" key="2">
    <source>
        <dbReference type="PROSITE-ProRule" id="PRU00193"/>
    </source>
</evidence>
<evidence type="ECO:0000305" key="3"/>
<keyword id="KW-0067">ATP-binding</keyword>
<keyword id="KW-0238">DNA-binding</keyword>
<keyword id="KW-0547">Nucleotide-binding</keyword>
<keyword id="KW-0597">Phosphoprotein</keyword>
<keyword id="KW-1185">Reference proteome</keyword>
<keyword id="KW-0804">Transcription</keyword>
<keyword id="KW-0805">Transcription regulation</keyword>
<keyword id="KW-0902">Two-component regulatory system</keyword>
<proteinExistence type="evidence at transcript level"/>
<reference key="1">
    <citation type="journal article" date="2000" name="Mol. Microbiol.">
        <title>A novel NO-responding regulator controls the reduction of nitric oxide in Ralstonia eutropha.</title>
        <authorList>
            <person name="Pohlmann A."/>
            <person name="Cramm R."/>
            <person name="Schmelz K."/>
            <person name="Friedrich B."/>
        </authorList>
    </citation>
    <scope>NUCLEOTIDE SEQUENCE [GENOMIC DNA]</scope>
</reference>
<reference key="2">
    <citation type="journal article" date="2006" name="Nat. Biotechnol.">
        <title>Genome sequence of the bioplastic-producing 'Knallgas' bacterium Ralstonia eutropha H16.</title>
        <authorList>
            <person name="Pohlmann A."/>
            <person name="Fricke W.F."/>
            <person name="Reinecke F."/>
            <person name="Kusian B."/>
            <person name="Liesegang H."/>
            <person name="Cramm R."/>
            <person name="Eitinger T."/>
            <person name="Ewering C."/>
            <person name="Poetter M."/>
            <person name="Schwartz E."/>
            <person name="Strittmatter A."/>
            <person name="Voss I."/>
            <person name="Gottschalk G."/>
            <person name="Steinbuechel A."/>
            <person name="Friedrich B."/>
            <person name="Bowien B."/>
        </authorList>
    </citation>
    <scope>NUCLEOTIDE SEQUENCE [LARGE SCALE GENOMIC DNA]</scope>
    <source>
        <strain>ATCC 17699 / DSM 428 / KCTC 22496 / NCIMB 10442 / H16 / Stanier 337</strain>
    </source>
</reference>
<sequence>MLPSAMYPELLADLVTDLPHAVRLQRLVSMLRTHFRCGAVALLRLEEDHLRPVAVDGLVRDALGRRFAVGLHPRLAAILARRGVTCFHHDSMLPDPYDGLIDEHVGEPLPVHDCMGTSLAVDGQPWGALTLDALAIGTFDAAAQAELQRLTVIVEAAIRTTRLEGEIRALQLARGTPEADEGTAQHGDIGGEIIGQSEAIANLLHELEVVADTDLPVLLLGETGVGKELFAHRLHRQSRRRAQPLVHVNCAALPESLAESELFGHARGAFSGATGERPGRFEAADGGTLFLDEVGELPLAIQAKLLRTLQNGEIQRLGSDRPRRVNVRVIAATNRNLREHVRDGSFRADLYHRLSVYPIPIPPLRERGNDVLLLAGRFLELNRARLGLRSLRLSGGAQDALRSYRWPGNVRELEHVISRAALRAVSRGAGRNDIVTLEPELLDLDGLEVPAAHHAGAGMASAFAAPALAAGITLRDAVEQTQRACIEQALKDQGGNWAQAARQLGIDASNLHKLARRLGCK</sequence>
<gene>
    <name type="primary">norR2</name>
    <name type="ordered locus">H16_B2325</name>
</gene>
<feature type="chain" id="PRO_0000081162" description="Nitric oxide reductase transcription regulator NorR2">
    <location>
        <begin position="1"/>
        <end position="521"/>
    </location>
</feature>
<feature type="domain" description="Sigma-54 factor interaction" evidence="2">
    <location>
        <begin position="193"/>
        <end position="422"/>
    </location>
</feature>
<feature type="DNA-binding region" description="H-T-H motif" evidence="1">
    <location>
        <begin position="497"/>
        <end position="516"/>
    </location>
</feature>
<feature type="binding site" evidence="2">
    <location>
        <begin position="221"/>
        <end position="228"/>
    </location>
    <ligand>
        <name>ATP</name>
        <dbReference type="ChEBI" id="CHEBI:30616"/>
    </ligand>
</feature>
<feature type="binding site" evidence="2">
    <location>
        <begin position="293"/>
        <end position="302"/>
    </location>
    <ligand>
        <name>ATP</name>
        <dbReference type="ChEBI" id="CHEBI:30616"/>
    </ligand>
</feature>
<feature type="modified residue" description="4-aspartylphosphate" evidence="1">
    <location>
        <position position="56"/>
    </location>
</feature>
<feature type="sequence conflict" description="In Ref. 1; CAC00712." evidence="3" ref="1">
    <original>Q</original>
    <variation>T</variation>
    <location>
        <position position="124"/>
    </location>
</feature>
<feature type="sequence conflict" description="In Ref. 1; CAC00712." evidence="3" ref="1">
    <original>GT</original>
    <variation>QP</variation>
    <location>
        <begin position="287"/>
        <end position="288"/>
    </location>
</feature>
<feature type="sequence conflict" description="In Ref. 1; CAC00712." evidence="3" ref="1">
    <original>RV</original>
    <variation>GS</variation>
    <location>
        <begin position="324"/>
        <end position="325"/>
    </location>
</feature>
<feature type="sequence conflict" description="In Ref. 1; CAC00712." evidence="3" ref="1">
    <original>S</original>
    <variation>T</variation>
    <location>
        <position position="390"/>
    </location>
</feature>
<feature type="sequence conflict" description="In Ref. 1; CAC00712." evidence="3" ref="1">
    <original>SGGAQDAL</original>
    <variation>FRRCAGCV</variation>
    <location>
        <begin position="394"/>
        <end position="401"/>
    </location>
</feature>
<feature type="sequence conflict" description="In Ref. 1; CAC00712." evidence="3" ref="1">
    <original>SRAALRA</original>
    <variation>QPRGAAC</variation>
    <location>
        <begin position="418"/>
        <end position="424"/>
    </location>
</feature>
<feature type="sequence conflict" description="In Ref. 1; CAC00712." evidence="3" ref="1">
    <original>ASAFA</original>
    <variation>PARSH</variation>
    <location>
        <begin position="460"/>
        <end position="464"/>
    </location>
</feature>
<accession>Q9K4U8</accession>
<accession>Q0JYR7</accession>
<comment type="function">
    <text>Required for the nitric oxide (NO) induced expression of NO reductase. Not required for expression of 2 other pathway members, nitrate reductase (nirS) and nitrous oxide reductase (nosZ).</text>
</comment>
<comment type="pathway">
    <text>Nitrogen metabolism; nitrate reduction (denitrification) [regulation].</text>
</comment>
<comment type="induction">
    <text>By anaerobic growth in the presence of NO.</text>
</comment>
<comment type="miscellaneous">
    <text>There are two very similar, functionally redundant regulators in this bacterium, NorR1 and NorR2.</text>
</comment>
<name>NORR2_CUPNH</name>